<accession>B6YST1</accession>
<proteinExistence type="inferred from homology"/>
<gene>
    <name evidence="1" type="primary">mvk</name>
    <name type="ordered locus">TON_0133</name>
</gene>
<protein>
    <recommendedName>
        <fullName evidence="1">Mevalonate kinase</fullName>
        <shortName evidence="1">MK</shortName>
        <shortName evidence="1">MVK</shortName>
        <ecNumber evidence="1">2.7.1.36</ecNumber>
    </recommendedName>
</protein>
<reference key="1">
    <citation type="journal article" date="2008" name="J. Bacteriol.">
        <title>The complete genome sequence of Thermococcus onnurineus NA1 reveals a mixed heterotrophic and carboxydotrophic metabolism.</title>
        <authorList>
            <person name="Lee H.S."/>
            <person name="Kang S.G."/>
            <person name="Bae S.S."/>
            <person name="Lim J.K."/>
            <person name="Cho Y."/>
            <person name="Kim Y.J."/>
            <person name="Jeon J.H."/>
            <person name="Cha S.-S."/>
            <person name="Kwon K.K."/>
            <person name="Kim H.-T."/>
            <person name="Park C.-J."/>
            <person name="Lee H.-W."/>
            <person name="Kim S.I."/>
            <person name="Chun J."/>
            <person name="Colwell R.R."/>
            <person name="Kim S.-J."/>
            <person name="Lee J.-H."/>
        </authorList>
    </citation>
    <scope>NUCLEOTIDE SEQUENCE [LARGE SCALE GENOMIC DNA]</scope>
    <source>
        <strain>NA1</strain>
    </source>
</reference>
<comment type="function">
    <text evidence="1">Catalyzes the phosphorylation of (R)-mevalonate (MVA) to (R)-mevalonate 5-phosphate (MVAP). Functions in the mevalonate (MVA) pathway leading to isopentenyl diphosphate (IPP), a key precursor for the biosynthesis of isoprenoid compounds such as archaeal membrane lipids.</text>
</comment>
<comment type="catalytic activity">
    <reaction evidence="1">
        <text>(R)-mevalonate + ATP = (R)-5-phosphomevalonate + ADP + H(+)</text>
        <dbReference type="Rhea" id="RHEA:17065"/>
        <dbReference type="ChEBI" id="CHEBI:15378"/>
        <dbReference type="ChEBI" id="CHEBI:30616"/>
        <dbReference type="ChEBI" id="CHEBI:36464"/>
        <dbReference type="ChEBI" id="CHEBI:58146"/>
        <dbReference type="ChEBI" id="CHEBI:456216"/>
        <dbReference type="EC" id="2.7.1.36"/>
    </reaction>
</comment>
<comment type="cofactor">
    <cofactor evidence="1">
        <name>Mg(2+)</name>
        <dbReference type="ChEBI" id="CHEBI:18420"/>
    </cofactor>
</comment>
<comment type="pathway">
    <text evidence="1">Isoprenoid biosynthesis; isopentenyl diphosphate biosynthesis via mevalonate pathway; isopentenyl diphosphate from (R)-mevalonate: step 1/3.</text>
</comment>
<comment type="subunit">
    <text evidence="1">Homodimer.</text>
</comment>
<comment type="subcellular location">
    <subcellularLocation>
        <location evidence="1">Cytoplasm</location>
    </subcellularLocation>
</comment>
<comment type="similarity">
    <text evidence="1">Belongs to the GHMP kinase family. Mevalonate kinase subfamily.</text>
</comment>
<keyword id="KW-0067">ATP-binding</keyword>
<keyword id="KW-0963">Cytoplasm</keyword>
<keyword id="KW-0414">Isoprene biosynthesis</keyword>
<keyword id="KW-0418">Kinase</keyword>
<keyword id="KW-0444">Lipid biosynthesis</keyword>
<keyword id="KW-0443">Lipid metabolism</keyword>
<keyword id="KW-0460">Magnesium</keyword>
<keyword id="KW-0547">Nucleotide-binding</keyword>
<keyword id="KW-0808">Transferase</keyword>
<dbReference type="EC" id="2.7.1.36" evidence="1"/>
<dbReference type="EMBL" id="CP000855">
    <property type="protein sequence ID" value="ACJ15618.1"/>
    <property type="molecule type" value="Genomic_DNA"/>
</dbReference>
<dbReference type="RefSeq" id="WP_012571091.1">
    <property type="nucleotide sequence ID" value="NC_011529.1"/>
</dbReference>
<dbReference type="SMR" id="B6YST1"/>
<dbReference type="STRING" id="523850.TON_0133"/>
<dbReference type="GeneID" id="7017787"/>
<dbReference type="KEGG" id="ton:TON_0133"/>
<dbReference type="PATRIC" id="fig|523850.10.peg.133"/>
<dbReference type="eggNOG" id="arCOG01028">
    <property type="taxonomic scope" value="Archaea"/>
</dbReference>
<dbReference type="HOGENOM" id="CLU_017814_0_0_2"/>
<dbReference type="OrthoDB" id="19001at2157"/>
<dbReference type="UniPathway" id="UPA00057">
    <property type="reaction ID" value="UER00098"/>
</dbReference>
<dbReference type="Proteomes" id="UP000002727">
    <property type="component" value="Chromosome"/>
</dbReference>
<dbReference type="GO" id="GO:0005829">
    <property type="term" value="C:cytosol"/>
    <property type="evidence" value="ECO:0007669"/>
    <property type="project" value="TreeGrafter"/>
</dbReference>
<dbReference type="GO" id="GO:0005524">
    <property type="term" value="F:ATP binding"/>
    <property type="evidence" value="ECO:0007669"/>
    <property type="project" value="UniProtKB-UniRule"/>
</dbReference>
<dbReference type="GO" id="GO:0000287">
    <property type="term" value="F:magnesium ion binding"/>
    <property type="evidence" value="ECO:0007669"/>
    <property type="project" value="UniProtKB-UniRule"/>
</dbReference>
<dbReference type="GO" id="GO:0004496">
    <property type="term" value="F:mevalonate kinase activity"/>
    <property type="evidence" value="ECO:0007669"/>
    <property type="project" value="UniProtKB-UniRule"/>
</dbReference>
<dbReference type="GO" id="GO:0019287">
    <property type="term" value="P:isopentenyl diphosphate biosynthetic process, mevalonate pathway"/>
    <property type="evidence" value="ECO:0007669"/>
    <property type="project" value="UniProtKB-UniRule"/>
</dbReference>
<dbReference type="FunFam" id="3.30.230.10:FF:000151">
    <property type="entry name" value="Mevalonate kinase"/>
    <property type="match status" value="1"/>
</dbReference>
<dbReference type="Gene3D" id="3.30.230.10">
    <property type="match status" value="1"/>
</dbReference>
<dbReference type="Gene3D" id="3.30.70.890">
    <property type="entry name" value="GHMP kinase, C-terminal domain"/>
    <property type="match status" value="1"/>
</dbReference>
<dbReference type="HAMAP" id="MF_00217">
    <property type="entry name" value="Mevalonate_kinase"/>
    <property type="match status" value="1"/>
</dbReference>
<dbReference type="InterPro" id="IPR013750">
    <property type="entry name" value="GHMP_kinase_C_dom"/>
</dbReference>
<dbReference type="InterPro" id="IPR036554">
    <property type="entry name" value="GHMP_kinase_C_sf"/>
</dbReference>
<dbReference type="InterPro" id="IPR006204">
    <property type="entry name" value="GHMP_kinase_N_dom"/>
</dbReference>
<dbReference type="InterPro" id="IPR006203">
    <property type="entry name" value="GHMP_knse_ATP-bd_CS"/>
</dbReference>
<dbReference type="InterPro" id="IPR006205">
    <property type="entry name" value="Mev_gal_kin"/>
</dbReference>
<dbReference type="InterPro" id="IPR022937">
    <property type="entry name" value="Mevalonate_kinase_arc"/>
</dbReference>
<dbReference type="InterPro" id="IPR020568">
    <property type="entry name" value="Ribosomal_Su5_D2-typ_SF"/>
</dbReference>
<dbReference type="InterPro" id="IPR014721">
    <property type="entry name" value="Ribsml_uS5_D2-typ_fold_subgr"/>
</dbReference>
<dbReference type="NCBIfam" id="TIGR00549">
    <property type="entry name" value="mevalon_kin"/>
    <property type="match status" value="1"/>
</dbReference>
<dbReference type="NCBIfam" id="NF003036">
    <property type="entry name" value="PRK03926.1"/>
    <property type="match status" value="1"/>
</dbReference>
<dbReference type="PANTHER" id="PTHR43290">
    <property type="entry name" value="MEVALONATE KINASE"/>
    <property type="match status" value="1"/>
</dbReference>
<dbReference type="PANTHER" id="PTHR43290:SF2">
    <property type="entry name" value="MEVALONATE KINASE"/>
    <property type="match status" value="1"/>
</dbReference>
<dbReference type="Pfam" id="PF08544">
    <property type="entry name" value="GHMP_kinases_C"/>
    <property type="match status" value="1"/>
</dbReference>
<dbReference type="Pfam" id="PF00288">
    <property type="entry name" value="GHMP_kinases_N"/>
    <property type="match status" value="1"/>
</dbReference>
<dbReference type="PRINTS" id="PR00959">
    <property type="entry name" value="MEVGALKINASE"/>
</dbReference>
<dbReference type="SUPFAM" id="SSF55060">
    <property type="entry name" value="GHMP Kinase, C-terminal domain"/>
    <property type="match status" value="1"/>
</dbReference>
<dbReference type="SUPFAM" id="SSF54211">
    <property type="entry name" value="Ribosomal protein S5 domain 2-like"/>
    <property type="match status" value="1"/>
</dbReference>
<dbReference type="PROSITE" id="PS00627">
    <property type="entry name" value="GHMP_KINASES_ATP"/>
    <property type="match status" value="1"/>
</dbReference>
<organism>
    <name type="scientific">Thermococcus onnurineus (strain NA1)</name>
    <dbReference type="NCBI Taxonomy" id="523850"/>
    <lineage>
        <taxon>Archaea</taxon>
        <taxon>Methanobacteriati</taxon>
        <taxon>Methanobacteriota</taxon>
        <taxon>Thermococci</taxon>
        <taxon>Thermococcales</taxon>
        <taxon>Thermococcaceae</taxon>
        <taxon>Thermococcus</taxon>
    </lineage>
</organism>
<name>MVK_THEON</name>
<feature type="chain" id="PRO_1000099965" description="Mevalonate kinase">
    <location>
        <begin position="1"/>
        <end position="334"/>
    </location>
</feature>
<feature type="active site" description="Proton acceptor" evidence="1">
    <location>
        <position position="161"/>
    </location>
</feature>
<feature type="binding site" evidence="1">
    <location>
        <begin position="110"/>
        <end position="120"/>
    </location>
    <ligand>
        <name>ATP</name>
        <dbReference type="ChEBI" id="CHEBI:30616"/>
    </ligand>
</feature>
<evidence type="ECO:0000255" key="1">
    <source>
        <dbReference type="HAMAP-Rule" id="MF_00217"/>
    </source>
</evidence>
<sequence length="334" mass="35316">MRVLASAPAKIILFGEHSVVYGKPAIAAAIDLRTYVWAEFNNKGAIKIEAKDIKVPGLTVSFSEDEIYFESDYGKAAEVLSYVRQAIELVREEADKNGNGVTVSITSQIPVGAGLGSSAAVAVATIGAVSRLLGLELSNEEIAKLGHKVELLVQGASSGIDPTVSAIGGFLHYEKGNFEHLPFMELPIVVGYTGSSGSTKELVAMVRRNYEEMPEVIEPILVSMGKIVEKAKDVLLSELDNEVRFVQLGRLMNINHGLLDALGVSTKKLSELVYAARTAGALGAKITGAGGGGCMYALAPEKQSEVATAITIAGGTPMITKISDEGLRIEEVLP</sequence>